<feature type="chain" id="PRO_0000064705" description="Aspartyl/asparaginyl beta-hydroxylase">
    <location>
        <begin position="1"/>
        <end position="754"/>
    </location>
</feature>
<feature type="topological domain" description="Cytoplasmic" evidence="2">
    <location>
        <begin position="1"/>
        <end position="56"/>
    </location>
</feature>
<feature type="transmembrane region" description="Helical; Signal-anchor for type II membrane protein" evidence="2">
    <location>
        <begin position="57"/>
        <end position="77"/>
    </location>
</feature>
<feature type="topological domain" description="Lumenal" evidence="2">
    <location>
        <begin position="78"/>
        <end position="754"/>
    </location>
</feature>
<feature type="repeat" description="TPR 1">
    <location>
        <begin position="337"/>
        <end position="370"/>
    </location>
</feature>
<feature type="repeat" description="TPR 2">
    <location>
        <begin position="378"/>
        <end position="411"/>
    </location>
</feature>
<feature type="repeat" description="TPR 3">
    <location>
        <begin position="450"/>
        <end position="483"/>
    </location>
</feature>
<feature type="repeat" description="TPR 4">
    <location>
        <begin position="485"/>
        <end position="517"/>
    </location>
</feature>
<feature type="repeat" description="TPR 5">
    <location>
        <begin position="521"/>
        <end position="553"/>
    </location>
</feature>
<feature type="region of interest" description="Disordered" evidence="3">
    <location>
        <begin position="1"/>
        <end position="48"/>
    </location>
</feature>
<feature type="region of interest" description="Disordered" evidence="3">
    <location>
        <begin position="176"/>
        <end position="197"/>
    </location>
</feature>
<feature type="region of interest" description="Disordered" evidence="3">
    <location>
        <begin position="247"/>
        <end position="326"/>
    </location>
</feature>
<feature type="compositionally biased region" description="Low complexity" evidence="3">
    <location>
        <begin position="14"/>
        <end position="34"/>
    </location>
</feature>
<feature type="compositionally biased region" description="Basic and acidic residues" evidence="3">
    <location>
        <begin position="261"/>
        <end position="284"/>
    </location>
</feature>
<feature type="compositionally biased region" description="Basic and acidic residues" evidence="3">
    <location>
        <begin position="309"/>
        <end position="318"/>
    </location>
</feature>
<feature type="binding site" evidence="1">
    <location>
        <position position="109"/>
    </location>
    <ligand>
        <name>Ca(2+)</name>
        <dbReference type="ChEBI" id="CHEBI:29108"/>
    </ligand>
</feature>
<feature type="binding site" evidence="1">
    <location>
        <position position="111"/>
    </location>
    <ligand>
        <name>Ca(2+)</name>
        <dbReference type="ChEBI" id="CHEBI:29108"/>
    </ligand>
</feature>
<feature type="binding site" evidence="1">
    <location>
        <position position="113"/>
    </location>
    <ligand>
        <name>Ca(2+)</name>
        <dbReference type="ChEBI" id="CHEBI:29108"/>
    </ligand>
</feature>
<feature type="binding site" evidence="1">
    <location>
        <position position="115"/>
    </location>
    <ligand>
        <name>Ca(2+)</name>
        <dbReference type="ChEBI" id="CHEBI:29108"/>
    </ligand>
</feature>
<feature type="binding site" evidence="1">
    <location>
        <position position="120"/>
    </location>
    <ligand>
        <name>Ca(2+)</name>
        <dbReference type="ChEBI" id="CHEBI:29108"/>
    </ligand>
</feature>
<feature type="binding site" evidence="1">
    <location>
        <position position="621"/>
    </location>
    <ligand>
        <name>2-oxoglutarate</name>
        <dbReference type="ChEBI" id="CHEBI:16810"/>
    </ligand>
</feature>
<feature type="binding site" evidence="1">
    <location>
        <position position="664"/>
    </location>
    <ligand>
        <name>2-oxoglutarate</name>
        <dbReference type="ChEBI" id="CHEBI:16810"/>
    </ligand>
</feature>
<feature type="binding site" evidence="1">
    <location>
        <position position="675"/>
    </location>
    <ligand>
        <name>Fe cation</name>
        <dbReference type="ChEBI" id="CHEBI:24875"/>
    </ligand>
</feature>
<feature type="binding site" evidence="1">
    <location>
        <begin position="684"/>
        <end position="686"/>
    </location>
    <ligand>
        <name>2-oxoglutarate</name>
        <dbReference type="ChEBI" id="CHEBI:16810"/>
    </ligand>
</feature>
<feature type="binding site" evidence="1">
    <location>
        <position position="721"/>
    </location>
    <ligand>
        <name>Fe cation</name>
        <dbReference type="ChEBI" id="CHEBI:24875"/>
    </ligand>
</feature>
<feature type="binding site" evidence="1">
    <location>
        <position position="731"/>
    </location>
    <ligand>
        <name>2-oxoglutarate</name>
        <dbReference type="ChEBI" id="CHEBI:16810"/>
    </ligand>
</feature>
<feature type="modified residue" description="Phosphoserine" evidence="1">
    <location>
        <position position="15"/>
    </location>
</feature>
<feature type="glycosylation site" description="N-linked (GlcNAc...) asparagine" evidence="2">
    <location>
        <position position="96"/>
    </location>
</feature>
<feature type="glycosylation site" description="N-linked (GlcNAc...) asparagine" evidence="2">
    <location>
        <position position="466"/>
    </location>
</feature>
<feature type="glycosylation site" description="N-linked (GlcNAc...) asparagine" evidence="2">
    <location>
        <position position="702"/>
    </location>
</feature>
<feature type="disulfide bond" evidence="1">
    <location>
        <begin position="637"/>
        <end position="644"/>
    </location>
</feature>
<reference key="1">
    <citation type="journal article" date="1992" name="J. Biol. Chem.">
        <title>cDNA cloning and expression of bovine aspartyl (asparaginyl) beta-hydroxylase.</title>
        <authorList>
            <person name="Jia S."/>
            <person name="Vandusen W.J."/>
            <person name="Diehl R.E."/>
            <person name="Kohl N.E."/>
            <person name="Dixon R.A.F."/>
            <person name="Elliston K.O."/>
            <person name="Stern A.M."/>
            <person name="Friedman P.A."/>
        </authorList>
    </citation>
    <scope>NUCLEOTIDE SEQUENCE [MRNA]</scope>
    <scope>CATALYTIC ACTIVITY</scope>
    <scope>SUBCELLULAR LOCATION</scope>
    <source>
        <tissue>Brain</tissue>
        <tissue>Liver</tissue>
    </source>
</reference>
<reference key="2">
    <citation type="journal article" date="1991" name="J. Biol. Chem.">
        <title>Bovine liver aspartyl beta-hydroxylase. Purification and characterization.</title>
        <authorList>
            <person name="Wang Q."/>
            <person name="Vandusen W.J."/>
            <person name="Petroski C.J."/>
            <person name="Garsky V.M."/>
            <person name="Stern A.M."/>
            <person name="Friedman P.A."/>
        </authorList>
    </citation>
    <scope>PROTEIN SEQUENCE OF 289-385 AND 615-641</scope>
    <scope>CATALYTIC ACTIVITY</scope>
    <scope>FUNCTION</scope>
    <scope>COFACTOR</scope>
    <scope>SUBUNIT</scope>
    <source>
        <tissue>Liver</tissue>
    </source>
</reference>
<dbReference type="EC" id="1.14.11.16" evidence="5"/>
<dbReference type="EMBL" id="M91213">
    <property type="protein sequence ID" value="AAA03563.1"/>
    <property type="molecule type" value="mRNA"/>
</dbReference>
<dbReference type="PIR" id="A42969">
    <property type="entry name" value="BABOH"/>
</dbReference>
<dbReference type="RefSeq" id="NP_777182.1">
    <property type="nucleotide sequence ID" value="NM_174757.2"/>
</dbReference>
<dbReference type="SMR" id="Q28056"/>
<dbReference type="FunCoup" id="Q28056">
    <property type="interactions" value="603"/>
</dbReference>
<dbReference type="STRING" id="9913.ENSBTAP00000021267"/>
<dbReference type="GlyCosmos" id="Q28056">
    <property type="glycosylation" value="3 sites, No reported glycans"/>
</dbReference>
<dbReference type="GlyGen" id="Q28056">
    <property type="glycosylation" value="3 sites"/>
</dbReference>
<dbReference type="PaxDb" id="9913-ENSBTAP00000021267"/>
<dbReference type="PeptideAtlas" id="Q28056"/>
<dbReference type="Ensembl" id="ENSBTAT00000021267.4">
    <property type="protein sequence ID" value="ENSBTAP00000021267.3"/>
    <property type="gene ID" value="ENSBTAG00000026283.6"/>
</dbReference>
<dbReference type="GeneID" id="286771"/>
<dbReference type="KEGG" id="bta:286771"/>
<dbReference type="CTD" id="444"/>
<dbReference type="VEuPathDB" id="HostDB:ENSBTAG00000026283"/>
<dbReference type="VGNC" id="VGNC:26219">
    <property type="gene designation" value="ASPH"/>
</dbReference>
<dbReference type="eggNOG" id="KOG3696">
    <property type="taxonomic scope" value="Eukaryota"/>
</dbReference>
<dbReference type="GeneTree" id="ENSGT00940000156304"/>
<dbReference type="HOGENOM" id="CLU_023717_0_0_1"/>
<dbReference type="InParanoid" id="Q28056"/>
<dbReference type="OMA" id="YTELVKX"/>
<dbReference type="OrthoDB" id="438431at2759"/>
<dbReference type="TreeFam" id="TF312799"/>
<dbReference type="Reactome" id="R-BTA-2672351">
    <property type="pathway name" value="Stimuli-sensing channels"/>
</dbReference>
<dbReference type="Reactome" id="R-BTA-5578775">
    <property type="pathway name" value="Ion homeostasis"/>
</dbReference>
<dbReference type="Proteomes" id="UP000009136">
    <property type="component" value="Chromosome 14"/>
</dbReference>
<dbReference type="Bgee" id="ENSBTAG00000026283">
    <property type="expression patterns" value="Expressed in omental fat pad and 108 other cell types or tissues"/>
</dbReference>
<dbReference type="GO" id="GO:0005783">
    <property type="term" value="C:endoplasmic reticulum"/>
    <property type="evidence" value="ECO:0000318"/>
    <property type="project" value="GO_Central"/>
</dbReference>
<dbReference type="GO" id="GO:0005788">
    <property type="term" value="C:endoplasmic reticulum lumen"/>
    <property type="evidence" value="ECO:0000304"/>
    <property type="project" value="Reactome"/>
</dbReference>
<dbReference type="GO" id="GO:0005789">
    <property type="term" value="C:endoplasmic reticulum membrane"/>
    <property type="evidence" value="ECO:0007669"/>
    <property type="project" value="UniProtKB-SubCell"/>
</dbReference>
<dbReference type="GO" id="GO:0046872">
    <property type="term" value="F:metal ion binding"/>
    <property type="evidence" value="ECO:0007669"/>
    <property type="project" value="UniProtKB-KW"/>
</dbReference>
<dbReference type="GO" id="GO:0062101">
    <property type="term" value="F:peptidyl-aspartic acid 3-dioxygenase activity"/>
    <property type="evidence" value="ECO:0000314"/>
    <property type="project" value="UniProtKB"/>
</dbReference>
<dbReference type="GO" id="GO:0042264">
    <property type="term" value="P:peptidyl-aspartic acid hydroxylation"/>
    <property type="evidence" value="ECO:0000314"/>
    <property type="project" value="UniProtKB"/>
</dbReference>
<dbReference type="GO" id="GO:0051480">
    <property type="term" value="P:regulation of cytosolic calcium ion concentration"/>
    <property type="evidence" value="ECO:0000318"/>
    <property type="project" value="GO_Central"/>
</dbReference>
<dbReference type="FunFam" id="1.25.40.10:FF:000151">
    <property type="entry name" value="Aspartyl/asparaginyl beta-hydroxylase"/>
    <property type="match status" value="1"/>
</dbReference>
<dbReference type="FunFam" id="1.25.40.10:FF:000154">
    <property type="entry name" value="Aspartyl/asparaginyl beta-hydroxylase"/>
    <property type="match status" value="1"/>
</dbReference>
<dbReference type="FunFam" id="2.60.120.330:FF:000004">
    <property type="entry name" value="aspartyl/asparaginyl beta-hydroxylase isoform X2"/>
    <property type="match status" value="1"/>
</dbReference>
<dbReference type="Gene3D" id="2.60.120.330">
    <property type="entry name" value="B-lactam Antibiotic, Isopenicillin N Synthase, Chain"/>
    <property type="match status" value="1"/>
</dbReference>
<dbReference type="Gene3D" id="1.25.40.10">
    <property type="entry name" value="Tetratricopeptide repeat domain"/>
    <property type="match status" value="2"/>
</dbReference>
<dbReference type="InterPro" id="IPR007943">
    <property type="entry name" value="Asp-B-hydro/Triadin_dom"/>
</dbReference>
<dbReference type="InterPro" id="IPR007803">
    <property type="entry name" value="Asp/Arg/Pro-Hydrxlase"/>
</dbReference>
<dbReference type="InterPro" id="IPR039038">
    <property type="entry name" value="ASPH"/>
</dbReference>
<dbReference type="InterPro" id="IPR027443">
    <property type="entry name" value="IPNS-like_sf"/>
</dbReference>
<dbReference type="InterPro" id="IPR011990">
    <property type="entry name" value="TPR-like_helical_dom_sf"/>
</dbReference>
<dbReference type="InterPro" id="IPR019734">
    <property type="entry name" value="TPR_rpt"/>
</dbReference>
<dbReference type="PANTHER" id="PTHR12366">
    <property type="entry name" value="ASPARTYL/ASPARAGINYL BETA-HYDROXYLASE"/>
    <property type="match status" value="1"/>
</dbReference>
<dbReference type="PANTHER" id="PTHR12366:SF33">
    <property type="entry name" value="ASPARTYL_ASPARAGINYL BETA-HYDROXYLASE"/>
    <property type="match status" value="1"/>
</dbReference>
<dbReference type="Pfam" id="PF05279">
    <property type="entry name" value="Asp-B-Hydro_N"/>
    <property type="match status" value="1"/>
</dbReference>
<dbReference type="Pfam" id="PF05118">
    <property type="entry name" value="Asp_Arg_Hydrox"/>
    <property type="match status" value="1"/>
</dbReference>
<dbReference type="Pfam" id="PF13432">
    <property type="entry name" value="TPR_16"/>
    <property type="match status" value="1"/>
</dbReference>
<dbReference type="SMART" id="SM00028">
    <property type="entry name" value="TPR"/>
    <property type="match status" value="2"/>
</dbReference>
<dbReference type="SUPFAM" id="SSF51197">
    <property type="entry name" value="Clavaminate synthase-like"/>
    <property type="match status" value="1"/>
</dbReference>
<dbReference type="SUPFAM" id="SSF48452">
    <property type="entry name" value="TPR-like"/>
    <property type="match status" value="1"/>
</dbReference>
<dbReference type="PROSITE" id="PS50005">
    <property type="entry name" value="TPR"/>
    <property type="match status" value="2"/>
</dbReference>
<dbReference type="PROSITE" id="PS50293">
    <property type="entry name" value="TPR_REGION"/>
    <property type="match status" value="1"/>
</dbReference>
<gene>
    <name type="primary">ASPH</name>
</gene>
<organism>
    <name type="scientific">Bos taurus</name>
    <name type="common">Bovine</name>
    <dbReference type="NCBI Taxonomy" id="9913"/>
    <lineage>
        <taxon>Eukaryota</taxon>
        <taxon>Metazoa</taxon>
        <taxon>Chordata</taxon>
        <taxon>Craniata</taxon>
        <taxon>Vertebrata</taxon>
        <taxon>Euteleostomi</taxon>
        <taxon>Mammalia</taxon>
        <taxon>Eutheria</taxon>
        <taxon>Laurasiatheria</taxon>
        <taxon>Artiodactyla</taxon>
        <taxon>Ruminantia</taxon>
        <taxon>Pecora</taxon>
        <taxon>Bovidae</taxon>
        <taxon>Bovinae</taxon>
        <taxon>Bos</taxon>
    </lineage>
</organism>
<accession>Q28056</accession>
<comment type="function">
    <text evidence="5">Specifically hydroxylates an Asp or Asn residue in certain epidermal growth factor-like (EGF) domains of a number of proteins.</text>
</comment>
<comment type="catalytic activity">
    <reaction evidence="4 5">
        <text>L-aspartyl-[protein] + 2-oxoglutarate + O2 = 3-hydroxy-L-aspartyl-[protein] + succinate + CO2</text>
        <dbReference type="Rhea" id="RHEA:11508"/>
        <dbReference type="Rhea" id="RHEA-COMP:9867"/>
        <dbReference type="Rhea" id="RHEA-COMP:14951"/>
        <dbReference type="ChEBI" id="CHEBI:15379"/>
        <dbReference type="ChEBI" id="CHEBI:16526"/>
        <dbReference type="ChEBI" id="CHEBI:16810"/>
        <dbReference type="ChEBI" id="CHEBI:17427"/>
        <dbReference type="ChEBI" id="CHEBI:29961"/>
        <dbReference type="ChEBI" id="CHEBI:30031"/>
        <dbReference type="EC" id="1.14.11.16"/>
    </reaction>
</comment>
<comment type="cofactor">
    <cofactor evidence="5">
        <name>Fe cation</name>
        <dbReference type="ChEBI" id="CHEBI:24875"/>
    </cofactor>
</comment>
<comment type="subunit">
    <text evidence="5">Monomer.</text>
</comment>
<comment type="subcellular location">
    <subcellularLocation>
        <location>Endoplasmic reticulum membrane</location>
        <topology evidence="6">Single-pass type II membrane protein</topology>
    </subcellularLocation>
</comment>
<comment type="PTM">
    <text evidence="7">Might be processed to the 56 kDa (AA 289-754) or 52 kDa (AA 311-754) forms in the lumen of the endoplasmic reticulum.</text>
</comment>
<comment type="similarity">
    <text evidence="8">Belongs to the aspartyl/asparaginyl beta-hydroxylase family.</text>
</comment>
<protein>
    <recommendedName>
        <fullName>Aspartyl/asparaginyl beta-hydroxylase</fullName>
        <ecNumber evidence="5">1.14.11.16</ecNumber>
    </recommendedName>
    <alternativeName>
        <fullName>Aspartate beta-hydroxylase</fullName>
        <shortName>ASP beta-hydroxylase</shortName>
    </alternativeName>
    <alternativeName>
        <fullName>Peptide-aspartate beta-dioxygenase</fullName>
    </alternativeName>
</protein>
<evidence type="ECO:0000250" key="1">
    <source>
        <dbReference type="UniProtKB" id="Q12797"/>
    </source>
</evidence>
<evidence type="ECO:0000255" key="2"/>
<evidence type="ECO:0000256" key="3">
    <source>
        <dbReference type="SAM" id="MobiDB-lite"/>
    </source>
</evidence>
<evidence type="ECO:0000269" key="4">
    <source>
    </source>
</evidence>
<evidence type="ECO:0000269" key="5">
    <source>
    </source>
</evidence>
<evidence type="ECO:0000303" key="6">
    <source>
    </source>
</evidence>
<evidence type="ECO:0000303" key="7">
    <source>
    </source>
</evidence>
<evidence type="ECO:0000305" key="8"/>
<keyword id="KW-0106">Calcium</keyword>
<keyword id="KW-0223">Dioxygenase</keyword>
<keyword id="KW-0903">Direct protein sequencing</keyword>
<keyword id="KW-1015">Disulfide bond</keyword>
<keyword id="KW-0256">Endoplasmic reticulum</keyword>
<keyword id="KW-0325">Glycoprotein</keyword>
<keyword id="KW-0408">Iron</keyword>
<keyword id="KW-0472">Membrane</keyword>
<keyword id="KW-0479">Metal-binding</keyword>
<keyword id="KW-0560">Oxidoreductase</keyword>
<keyword id="KW-0597">Phosphoprotein</keyword>
<keyword id="KW-1185">Reference proteome</keyword>
<keyword id="KW-0677">Repeat</keyword>
<keyword id="KW-0735">Signal-anchor</keyword>
<keyword id="KW-0802">TPR repeat</keyword>
<keyword id="KW-0812">Transmembrane</keyword>
<keyword id="KW-1133">Transmembrane helix</keyword>
<proteinExistence type="evidence at protein level"/>
<name>ASPH_BOVIN</name>
<sequence>MAPRKNAKGGGGNSSSSSSGSPTGCTSGGSSSPGARRETKQGGLKNGRKGGLSGSSFFTWFMVIALLGVWTSVAVVWFDLVDYEEVLAKAKDFRYNLSEVLQGKLGIYDADGDGDFDVDDAKVLLGLKEKPAPKPTVPPEEADMYPWLEDQVLESPGRQNIEDEVYEQVQSLDETVYSEPGENLPQEPEGPAEELQPDDHVFVGSDADDRYEPMGTGAVHEETEDSYHIEETASPAYSQDMEDMMYEQENPDSSEPVVVDDAERTYQETDDVTYRDYDEQDHAVDNSNTILEEPHMPPAEEQQEVPPETNKKADEPGKKGKVKKKKPKLLNKFDKTIKAELDAAEKLRKRGKIEEAVNAFEELVRKYPQSPGARYGKAQCEDDLAEKRRSNEILRRAIETYQEAASLPDAPTDLVKLSLKRRSDRQQFLGHMRGSLLTLQKLVQLFPDDTALKNDLGVGYLLIGDNDSAKKVYEEVLSVTPNDGFAKVHYGFILKAQNKIAESIPYLKEGIESGDPGTDDGRFYFHLGDAMQRVGNKEAYRWYELGHQRGHFASVWQRSLYNVQGLKAQPWWTPKETGYTELVKSLERNWKLIRDEGLAAMDRTHGLFLPEDENLREKGDWSQFTLWQQGRKNENACKGAPKTCSLLDKFPETTGCRRGQIKYSIMHPGTHVWPHTGPTNCRLRMHLGLVIPKEGCKIRCANETRTWEEGKVLIFDDSFEHEVWQDAASFRLIFIVDVWHPELTPHQRRSLPAI</sequence>